<dbReference type="EC" id="2.3.1.-"/>
<dbReference type="EMBL" id="CU329671">
    <property type="protein sequence ID" value="CAA22668.1"/>
    <property type="molecule type" value="Genomic_DNA"/>
</dbReference>
<dbReference type="PIR" id="T39759">
    <property type="entry name" value="T39759"/>
</dbReference>
<dbReference type="RefSeq" id="NP_595854.1">
    <property type="nucleotide sequence ID" value="NM_001021758.2"/>
</dbReference>
<dbReference type="SMR" id="O94498"/>
<dbReference type="STRING" id="284812.O94498"/>
<dbReference type="PaxDb" id="4896-SPBC18E5.08.1"/>
<dbReference type="EnsemblFungi" id="SPBC18E5.08.1">
    <property type="protein sequence ID" value="SPBC18E5.08.1:pep"/>
    <property type="gene ID" value="SPBC18E5.08"/>
</dbReference>
<dbReference type="KEGG" id="spo:2540603"/>
<dbReference type="PomBase" id="SPBC18E5.08"/>
<dbReference type="VEuPathDB" id="FungiDB:SPBC18E5.08"/>
<dbReference type="eggNOG" id="ENOG502SBCZ">
    <property type="taxonomic scope" value="Eukaryota"/>
</dbReference>
<dbReference type="HOGENOM" id="CLU_1455213_0_0_1"/>
<dbReference type="InParanoid" id="O94498"/>
<dbReference type="OMA" id="KRWVFGI"/>
<dbReference type="PRO" id="PR:O94498"/>
<dbReference type="Proteomes" id="UP000002485">
    <property type="component" value="Chromosome II"/>
</dbReference>
<dbReference type="GO" id="GO:0005829">
    <property type="term" value="C:cytosol"/>
    <property type="evidence" value="ECO:0007005"/>
    <property type="project" value="PomBase"/>
</dbReference>
<dbReference type="GO" id="GO:0005634">
    <property type="term" value="C:nucleus"/>
    <property type="evidence" value="ECO:0007005"/>
    <property type="project" value="PomBase"/>
</dbReference>
<dbReference type="GO" id="GO:0016747">
    <property type="term" value="F:acyltransferase activity, transferring groups other than amino-acyl groups"/>
    <property type="evidence" value="ECO:0007669"/>
    <property type="project" value="InterPro"/>
</dbReference>
<dbReference type="Gene3D" id="3.40.630.30">
    <property type="match status" value="1"/>
</dbReference>
<dbReference type="InterPro" id="IPR016181">
    <property type="entry name" value="Acyl_CoA_acyltransferase"/>
</dbReference>
<dbReference type="InterPro" id="IPR000182">
    <property type="entry name" value="GNAT_dom"/>
</dbReference>
<dbReference type="InterPro" id="IPR051531">
    <property type="entry name" value="N-acetyltransferase"/>
</dbReference>
<dbReference type="PANTHER" id="PTHR43792">
    <property type="entry name" value="GNAT FAMILY, PUTATIVE (AFU_ORTHOLOGUE AFUA_3G00765)-RELATED-RELATED"/>
    <property type="match status" value="1"/>
</dbReference>
<dbReference type="PANTHER" id="PTHR43792:SF15">
    <property type="entry name" value="MYND-TYPE DOMAIN-CONTAINING PROTEIN"/>
    <property type="match status" value="1"/>
</dbReference>
<dbReference type="Pfam" id="PF13302">
    <property type="entry name" value="Acetyltransf_3"/>
    <property type="match status" value="1"/>
</dbReference>
<dbReference type="SUPFAM" id="SSF55729">
    <property type="entry name" value="Acyl-CoA N-acyltransferases (Nat)"/>
    <property type="match status" value="1"/>
</dbReference>
<feature type="chain" id="PRO_0000310293" description="Uncharacterized N-acetyltransferase C18E5.08">
    <location>
        <begin position="1"/>
        <end position="186"/>
    </location>
</feature>
<feature type="domain" description="N-acetyltransferase">
    <location>
        <begin position="12"/>
        <end position="184"/>
    </location>
</feature>
<evidence type="ECO:0000269" key="1">
    <source>
    </source>
</evidence>
<evidence type="ECO:0000305" key="2"/>
<comment type="subcellular location">
    <subcellularLocation>
        <location evidence="1">Cytoplasm</location>
    </subcellularLocation>
    <subcellularLocation>
        <location evidence="1">Nucleus</location>
    </subcellularLocation>
</comment>
<comment type="similarity">
    <text evidence="2">Belongs to the acetyltransferase family.</text>
</comment>
<sequence>MSKIILKTSRFLLKSPVEEDDFDQITKIKSDPLVSNTQLYGKVESRELCRFMFQHYITDARITKTRRKRWVFGIYPLEVSSTFPSICYIGNVGLSKKNVKSDTANLFFEIGPLYWGMGIATECVGRVIEFGSENNIQNFIIDPIIGNEASKKVALKLGFEDSGTFVTAYNGLQQHIYKLSKQIRTG</sequence>
<accession>O94498</accession>
<organism>
    <name type="scientific">Schizosaccharomyces pombe (strain 972 / ATCC 24843)</name>
    <name type="common">Fission yeast</name>
    <dbReference type="NCBI Taxonomy" id="284812"/>
    <lineage>
        <taxon>Eukaryota</taxon>
        <taxon>Fungi</taxon>
        <taxon>Dikarya</taxon>
        <taxon>Ascomycota</taxon>
        <taxon>Taphrinomycotina</taxon>
        <taxon>Schizosaccharomycetes</taxon>
        <taxon>Schizosaccharomycetales</taxon>
        <taxon>Schizosaccharomycetaceae</taxon>
        <taxon>Schizosaccharomyces</taxon>
    </lineage>
</organism>
<reference key="1">
    <citation type="journal article" date="2002" name="Nature">
        <title>The genome sequence of Schizosaccharomyces pombe.</title>
        <authorList>
            <person name="Wood V."/>
            <person name="Gwilliam R."/>
            <person name="Rajandream M.A."/>
            <person name="Lyne M.H."/>
            <person name="Lyne R."/>
            <person name="Stewart A."/>
            <person name="Sgouros J.G."/>
            <person name="Peat N."/>
            <person name="Hayles J."/>
            <person name="Baker S.G."/>
            <person name="Basham D."/>
            <person name="Bowman S."/>
            <person name="Brooks K."/>
            <person name="Brown D."/>
            <person name="Brown S."/>
            <person name="Chillingworth T."/>
            <person name="Churcher C.M."/>
            <person name="Collins M."/>
            <person name="Connor R."/>
            <person name="Cronin A."/>
            <person name="Davis P."/>
            <person name="Feltwell T."/>
            <person name="Fraser A."/>
            <person name="Gentles S."/>
            <person name="Goble A."/>
            <person name="Hamlin N."/>
            <person name="Harris D.E."/>
            <person name="Hidalgo J."/>
            <person name="Hodgson G."/>
            <person name="Holroyd S."/>
            <person name="Hornsby T."/>
            <person name="Howarth S."/>
            <person name="Huckle E.J."/>
            <person name="Hunt S."/>
            <person name="Jagels K."/>
            <person name="James K.D."/>
            <person name="Jones L."/>
            <person name="Jones M."/>
            <person name="Leather S."/>
            <person name="McDonald S."/>
            <person name="McLean J."/>
            <person name="Mooney P."/>
            <person name="Moule S."/>
            <person name="Mungall K.L."/>
            <person name="Murphy L.D."/>
            <person name="Niblett D."/>
            <person name="Odell C."/>
            <person name="Oliver K."/>
            <person name="O'Neil S."/>
            <person name="Pearson D."/>
            <person name="Quail M.A."/>
            <person name="Rabbinowitsch E."/>
            <person name="Rutherford K.M."/>
            <person name="Rutter S."/>
            <person name="Saunders D."/>
            <person name="Seeger K."/>
            <person name="Sharp S."/>
            <person name="Skelton J."/>
            <person name="Simmonds M.N."/>
            <person name="Squares R."/>
            <person name="Squares S."/>
            <person name="Stevens K."/>
            <person name="Taylor K."/>
            <person name="Taylor R.G."/>
            <person name="Tivey A."/>
            <person name="Walsh S.V."/>
            <person name="Warren T."/>
            <person name="Whitehead S."/>
            <person name="Woodward J.R."/>
            <person name="Volckaert G."/>
            <person name="Aert R."/>
            <person name="Robben J."/>
            <person name="Grymonprez B."/>
            <person name="Weltjens I."/>
            <person name="Vanstreels E."/>
            <person name="Rieger M."/>
            <person name="Schaefer M."/>
            <person name="Mueller-Auer S."/>
            <person name="Gabel C."/>
            <person name="Fuchs M."/>
            <person name="Duesterhoeft A."/>
            <person name="Fritzc C."/>
            <person name="Holzer E."/>
            <person name="Moestl D."/>
            <person name="Hilbert H."/>
            <person name="Borzym K."/>
            <person name="Langer I."/>
            <person name="Beck A."/>
            <person name="Lehrach H."/>
            <person name="Reinhardt R."/>
            <person name="Pohl T.M."/>
            <person name="Eger P."/>
            <person name="Zimmermann W."/>
            <person name="Wedler H."/>
            <person name="Wambutt R."/>
            <person name="Purnelle B."/>
            <person name="Goffeau A."/>
            <person name="Cadieu E."/>
            <person name="Dreano S."/>
            <person name="Gloux S."/>
            <person name="Lelaure V."/>
            <person name="Mottier S."/>
            <person name="Galibert F."/>
            <person name="Aves S.J."/>
            <person name="Xiang Z."/>
            <person name="Hunt C."/>
            <person name="Moore K."/>
            <person name="Hurst S.M."/>
            <person name="Lucas M."/>
            <person name="Rochet M."/>
            <person name="Gaillardin C."/>
            <person name="Tallada V.A."/>
            <person name="Garzon A."/>
            <person name="Thode G."/>
            <person name="Daga R.R."/>
            <person name="Cruzado L."/>
            <person name="Jimenez J."/>
            <person name="Sanchez M."/>
            <person name="del Rey F."/>
            <person name="Benito J."/>
            <person name="Dominguez A."/>
            <person name="Revuelta J.L."/>
            <person name="Moreno S."/>
            <person name="Armstrong J."/>
            <person name="Forsburg S.L."/>
            <person name="Cerutti L."/>
            <person name="Lowe T."/>
            <person name="McCombie W.R."/>
            <person name="Paulsen I."/>
            <person name="Potashkin J."/>
            <person name="Shpakovski G.V."/>
            <person name="Ussery D."/>
            <person name="Barrell B.G."/>
            <person name="Nurse P."/>
        </authorList>
    </citation>
    <scope>NUCLEOTIDE SEQUENCE [LARGE SCALE GENOMIC DNA]</scope>
    <source>
        <strain>972 / ATCC 24843</strain>
    </source>
</reference>
<reference key="2">
    <citation type="journal article" date="2006" name="Nat. Biotechnol.">
        <title>ORFeome cloning and global analysis of protein localization in the fission yeast Schizosaccharomyces pombe.</title>
        <authorList>
            <person name="Matsuyama A."/>
            <person name="Arai R."/>
            <person name="Yashiroda Y."/>
            <person name="Shirai A."/>
            <person name="Kamata A."/>
            <person name="Sekido S."/>
            <person name="Kobayashi Y."/>
            <person name="Hashimoto A."/>
            <person name="Hamamoto M."/>
            <person name="Hiraoka Y."/>
            <person name="Horinouchi S."/>
            <person name="Yoshida M."/>
        </authorList>
    </citation>
    <scope>SUBCELLULAR LOCATION [LARGE SCALE ANALYSIS]</scope>
</reference>
<name>YBS8_SCHPO</name>
<protein>
    <recommendedName>
        <fullName>Uncharacterized N-acetyltransferase C18E5.08</fullName>
        <ecNumber>2.3.1.-</ecNumber>
    </recommendedName>
</protein>
<keyword id="KW-0012">Acyltransferase</keyword>
<keyword id="KW-0963">Cytoplasm</keyword>
<keyword id="KW-0539">Nucleus</keyword>
<keyword id="KW-1185">Reference proteome</keyword>
<keyword id="KW-0808">Transferase</keyword>
<proteinExistence type="inferred from homology"/>
<gene>
    <name type="ORF">SPBC18E5.08</name>
</gene>